<comment type="function">
    <text evidence="1">Possible tumor suppressor which may play a role in cell growth.</text>
</comment>
<comment type="subcellular location">
    <subcellularLocation>
        <location evidence="6">Membrane</location>
        <topology evidence="6">Multi-pass membrane protein</topology>
    </subcellularLocation>
</comment>
<comment type="alternative products">
    <event type="alternative splicing"/>
    <isoform>
        <id>Q3TPR7-1</id>
        <name>1</name>
        <sequence type="displayed"/>
    </isoform>
    <isoform>
        <id>Q3TPR7-2</id>
        <name>2</name>
        <sequence type="described" ref="VSP_025567"/>
    </isoform>
</comment>
<comment type="similarity">
    <text evidence="6">Belongs to the TMEM184 family.</text>
</comment>
<organism>
    <name type="scientific">Mus musculus</name>
    <name type="common">Mouse</name>
    <dbReference type="NCBI Taxonomy" id="10090"/>
    <lineage>
        <taxon>Eukaryota</taxon>
        <taxon>Metazoa</taxon>
        <taxon>Chordata</taxon>
        <taxon>Craniata</taxon>
        <taxon>Vertebrata</taxon>
        <taxon>Euteleostomi</taxon>
        <taxon>Mammalia</taxon>
        <taxon>Eutheria</taxon>
        <taxon>Euarchontoglires</taxon>
        <taxon>Glires</taxon>
        <taxon>Rodentia</taxon>
        <taxon>Myomorpha</taxon>
        <taxon>Muroidea</taxon>
        <taxon>Muridae</taxon>
        <taxon>Murinae</taxon>
        <taxon>Mus</taxon>
        <taxon>Mus</taxon>
    </lineage>
</organism>
<reference key="1">
    <citation type="journal article" date="2005" name="Science">
        <title>The transcriptional landscape of the mammalian genome.</title>
        <authorList>
            <person name="Carninci P."/>
            <person name="Kasukawa T."/>
            <person name="Katayama S."/>
            <person name="Gough J."/>
            <person name="Frith M.C."/>
            <person name="Maeda N."/>
            <person name="Oyama R."/>
            <person name="Ravasi T."/>
            <person name="Lenhard B."/>
            <person name="Wells C."/>
            <person name="Kodzius R."/>
            <person name="Shimokawa K."/>
            <person name="Bajic V.B."/>
            <person name="Brenner S.E."/>
            <person name="Batalov S."/>
            <person name="Forrest A.R."/>
            <person name="Zavolan M."/>
            <person name="Davis M.J."/>
            <person name="Wilming L.G."/>
            <person name="Aidinis V."/>
            <person name="Allen J.E."/>
            <person name="Ambesi-Impiombato A."/>
            <person name="Apweiler R."/>
            <person name="Aturaliya R.N."/>
            <person name="Bailey T.L."/>
            <person name="Bansal M."/>
            <person name="Baxter L."/>
            <person name="Beisel K.W."/>
            <person name="Bersano T."/>
            <person name="Bono H."/>
            <person name="Chalk A.M."/>
            <person name="Chiu K.P."/>
            <person name="Choudhary V."/>
            <person name="Christoffels A."/>
            <person name="Clutterbuck D.R."/>
            <person name="Crowe M.L."/>
            <person name="Dalla E."/>
            <person name="Dalrymple B.P."/>
            <person name="de Bono B."/>
            <person name="Della Gatta G."/>
            <person name="di Bernardo D."/>
            <person name="Down T."/>
            <person name="Engstrom P."/>
            <person name="Fagiolini M."/>
            <person name="Faulkner G."/>
            <person name="Fletcher C.F."/>
            <person name="Fukushima T."/>
            <person name="Furuno M."/>
            <person name="Futaki S."/>
            <person name="Gariboldi M."/>
            <person name="Georgii-Hemming P."/>
            <person name="Gingeras T.R."/>
            <person name="Gojobori T."/>
            <person name="Green R.E."/>
            <person name="Gustincich S."/>
            <person name="Harbers M."/>
            <person name="Hayashi Y."/>
            <person name="Hensch T.K."/>
            <person name="Hirokawa N."/>
            <person name="Hill D."/>
            <person name="Huminiecki L."/>
            <person name="Iacono M."/>
            <person name="Ikeo K."/>
            <person name="Iwama A."/>
            <person name="Ishikawa T."/>
            <person name="Jakt M."/>
            <person name="Kanapin A."/>
            <person name="Katoh M."/>
            <person name="Kawasawa Y."/>
            <person name="Kelso J."/>
            <person name="Kitamura H."/>
            <person name="Kitano H."/>
            <person name="Kollias G."/>
            <person name="Krishnan S.P."/>
            <person name="Kruger A."/>
            <person name="Kummerfeld S.K."/>
            <person name="Kurochkin I.V."/>
            <person name="Lareau L.F."/>
            <person name="Lazarevic D."/>
            <person name="Lipovich L."/>
            <person name="Liu J."/>
            <person name="Liuni S."/>
            <person name="McWilliam S."/>
            <person name="Madan Babu M."/>
            <person name="Madera M."/>
            <person name="Marchionni L."/>
            <person name="Matsuda H."/>
            <person name="Matsuzawa S."/>
            <person name="Miki H."/>
            <person name="Mignone F."/>
            <person name="Miyake S."/>
            <person name="Morris K."/>
            <person name="Mottagui-Tabar S."/>
            <person name="Mulder N."/>
            <person name="Nakano N."/>
            <person name="Nakauchi H."/>
            <person name="Ng P."/>
            <person name="Nilsson R."/>
            <person name="Nishiguchi S."/>
            <person name="Nishikawa S."/>
            <person name="Nori F."/>
            <person name="Ohara O."/>
            <person name="Okazaki Y."/>
            <person name="Orlando V."/>
            <person name="Pang K.C."/>
            <person name="Pavan W.J."/>
            <person name="Pavesi G."/>
            <person name="Pesole G."/>
            <person name="Petrovsky N."/>
            <person name="Piazza S."/>
            <person name="Reed J."/>
            <person name="Reid J.F."/>
            <person name="Ring B.Z."/>
            <person name="Ringwald M."/>
            <person name="Rost B."/>
            <person name="Ruan Y."/>
            <person name="Salzberg S.L."/>
            <person name="Sandelin A."/>
            <person name="Schneider C."/>
            <person name="Schoenbach C."/>
            <person name="Sekiguchi K."/>
            <person name="Semple C.A."/>
            <person name="Seno S."/>
            <person name="Sessa L."/>
            <person name="Sheng Y."/>
            <person name="Shibata Y."/>
            <person name="Shimada H."/>
            <person name="Shimada K."/>
            <person name="Silva D."/>
            <person name="Sinclair B."/>
            <person name="Sperling S."/>
            <person name="Stupka E."/>
            <person name="Sugiura K."/>
            <person name="Sultana R."/>
            <person name="Takenaka Y."/>
            <person name="Taki K."/>
            <person name="Tammoja K."/>
            <person name="Tan S.L."/>
            <person name="Tang S."/>
            <person name="Taylor M.S."/>
            <person name="Tegner J."/>
            <person name="Teichmann S.A."/>
            <person name="Ueda H.R."/>
            <person name="van Nimwegen E."/>
            <person name="Verardo R."/>
            <person name="Wei C.L."/>
            <person name="Yagi K."/>
            <person name="Yamanishi H."/>
            <person name="Zabarovsky E."/>
            <person name="Zhu S."/>
            <person name="Zimmer A."/>
            <person name="Hide W."/>
            <person name="Bult C."/>
            <person name="Grimmond S.M."/>
            <person name="Teasdale R.D."/>
            <person name="Liu E.T."/>
            <person name="Brusic V."/>
            <person name="Quackenbush J."/>
            <person name="Wahlestedt C."/>
            <person name="Mattick J.S."/>
            <person name="Hume D.A."/>
            <person name="Kai C."/>
            <person name="Sasaki D."/>
            <person name="Tomaru Y."/>
            <person name="Fukuda S."/>
            <person name="Kanamori-Katayama M."/>
            <person name="Suzuki M."/>
            <person name="Aoki J."/>
            <person name="Arakawa T."/>
            <person name="Iida J."/>
            <person name="Imamura K."/>
            <person name="Itoh M."/>
            <person name="Kato T."/>
            <person name="Kawaji H."/>
            <person name="Kawagashira N."/>
            <person name="Kawashima T."/>
            <person name="Kojima M."/>
            <person name="Kondo S."/>
            <person name="Konno H."/>
            <person name="Nakano K."/>
            <person name="Ninomiya N."/>
            <person name="Nishio T."/>
            <person name="Okada M."/>
            <person name="Plessy C."/>
            <person name="Shibata K."/>
            <person name="Shiraki T."/>
            <person name="Suzuki S."/>
            <person name="Tagami M."/>
            <person name="Waki K."/>
            <person name="Watahiki A."/>
            <person name="Okamura-Oho Y."/>
            <person name="Suzuki H."/>
            <person name="Kawai J."/>
            <person name="Hayashizaki Y."/>
        </authorList>
    </citation>
    <scope>NUCLEOTIDE SEQUENCE [LARGE SCALE MRNA] (ISOFORMS 1 AND 2)</scope>
    <source>
        <strain>C57BL/6J</strain>
        <tissue>Hippocampus</tissue>
        <tissue>Lung</tissue>
    </source>
</reference>
<reference key="2">
    <citation type="journal article" date="2004" name="Genome Res.">
        <title>The status, quality, and expansion of the NIH full-length cDNA project: the Mammalian Gene Collection (MGC).</title>
        <authorList>
            <consortium name="The MGC Project Team"/>
        </authorList>
    </citation>
    <scope>NUCLEOTIDE SEQUENCE [LARGE SCALE MRNA] (ISOFORM 2)</scope>
    <source>
        <strain>Czech II</strain>
        <tissue>Mammary tumor</tissue>
    </source>
</reference>
<gene>
    <name type="primary">Tmem184c</name>
    <name type="synonym">Tmem34</name>
</gene>
<accession>Q3TPR7</accession>
<accession>Q8CCD2</accession>
<accession>Q99KQ7</accession>
<keyword id="KW-0025">Alternative splicing</keyword>
<keyword id="KW-0472">Membrane</keyword>
<keyword id="KW-1185">Reference proteome</keyword>
<keyword id="KW-0812">Transmembrane</keyword>
<keyword id="KW-1133">Transmembrane helix</keyword>
<sequence length="525" mass="60043">MPCACNRSNWRRWIRPLLVLFYATTILVAVPICIWKFQKMKVGMHTKSWFIAGIFLLLTIPVSLWGILQHLVHYTQPELQKPIIRILWMVPIYSVDSWVALVYPKIAIYVDTWRECYEAYVIYNFMIFLTNYLTIRFPNLILHLEAKDQQNHILPLCCCPPWAMGEMLLFRCKLGVLQYTVVRPITTVTALVCEILDVYDEGNFGFSNAWTYLVILNNLSQLFAMYCLLLFYKVLKEELSPIQPVGKFLCVKLVVFVSFWQAVLIALLVKLGVISEKRTWEWQSAEAVATGLQDFIICIEMFFAAIAHHYTFSYKPYVHEAEEGSCFDSFLAMWDVSDIRDDISEQVRRVGRTMRGYPKKKCFPGDPDHNEHSSLLSSSSQDLTSGSSKVPSPGGLYQGFGHTISSQSPISIASIYEEIMNDIPEEQQKLLNPGQDVTINIPEEQQKLIDKRKDVMIDIPEQNAIPDNSQYQDQEQIVTLQALFPSTETSENSMIDTSESQQESSDLCTESSDSSTESSDLSTDP</sequence>
<feature type="chain" id="PRO_0000287568" description="Transmembrane protein 184C">
    <location>
        <begin position="1"/>
        <end position="525"/>
    </location>
</feature>
<feature type="transmembrane region" description="Helical" evidence="2">
    <location>
        <begin position="17"/>
        <end position="37"/>
    </location>
</feature>
<feature type="transmembrane region" description="Helical" evidence="2">
    <location>
        <begin position="48"/>
        <end position="68"/>
    </location>
</feature>
<feature type="transmembrane region" description="Helical" evidence="2">
    <location>
        <begin position="83"/>
        <end position="103"/>
    </location>
</feature>
<feature type="transmembrane region" description="Helical" evidence="2">
    <location>
        <begin position="121"/>
        <end position="141"/>
    </location>
</feature>
<feature type="transmembrane region" description="Helical" evidence="2">
    <location>
        <begin position="212"/>
        <end position="232"/>
    </location>
</feature>
<feature type="transmembrane region" description="Helical" evidence="2">
    <location>
        <begin position="254"/>
        <end position="274"/>
    </location>
</feature>
<feature type="transmembrane region" description="Helical" evidence="2">
    <location>
        <begin position="287"/>
        <end position="307"/>
    </location>
</feature>
<feature type="region of interest" description="Disordered" evidence="3">
    <location>
        <begin position="358"/>
        <end position="394"/>
    </location>
</feature>
<feature type="region of interest" description="Disordered" evidence="3">
    <location>
        <begin position="483"/>
        <end position="525"/>
    </location>
</feature>
<feature type="compositionally biased region" description="Low complexity" evidence="3">
    <location>
        <begin position="373"/>
        <end position="388"/>
    </location>
</feature>
<feature type="compositionally biased region" description="Polar residues" evidence="3">
    <location>
        <begin position="483"/>
        <end position="502"/>
    </location>
</feature>
<feature type="compositionally biased region" description="Low complexity" evidence="3">
    <location>
        <begin position="503"/>
        <end position="525"/>
    </location>
</feature>
<feature type="splice variant" id="VSP_025567" description="In isoform 2." evidence="4 5">
    <original>T</original>
    <variation>TINIPEEQQKLNTGKDVMLDRQTITSPRPISIASIYEKIMIDIPEEQQKLTDTGQDVMINRQTITPPRPISITSIYEEVLIDITEKQQKLNDTGKNVM</variation>
    <location>
        <position position="438"/>
    </location>
</feature>
<feature type="sequence conflict" description="In Ref. 1; BAC28273." evidence="6" ref="1">
    <original>L</original>
    <variation>F</variation>
    <location>
        <position position="483"/>
    </location>
</feature>
<feature type="sequence conflict" description="In Ref. 2; AAH04056." evidence="6" ref="2">
    <original>K</original>
    <variation>E</variation>
    <location sequence="Q3TPR7-2">
        <position position="475"/>
    </location>
</feature>
<protein>
    <recommendedName>
        <fullName>Transmembrane protein 184C</fullName>
    </recommendedName>
    <alternativeName>
        <fullName>Transmembrane protein 34</fullName>
    </alternativeName>
</protein>
<evidence type="ECO:0000250" key="1"/>
<evidence type="ECO:0000255" key="2"/>
<evidence type="ECO:0000256" key="3">
    <source>
        <dbReference type="SAM" id="MobiDB-lite"/>
    </source>
</evidence>
<evidence type="ECO:0000303" key="4">
    <source>
    </source>
</evidence>
<evidence type="ECO:0000303" key="5">
    <source>
    </source>
</evidence>
<evidence type="ECO:0000305" key="6"/>
<proteinExistence type="evidence at transcript level"/>
<dbReference type="EMBL" id="AK033404">
    <property type="protein sequence ID" value="BAC28273.1"/>
    <property type="molecule type" value="mRNA"/>
</dbReference>
<dbReference type="EMBL" id="AK164182">
    <property type="protein sequence ID" value="BAE37668.1"/>
    <property type="molecule type" value="mRNA"/>
</dbReference>
<dbReference type="EMBL" id="BC004056">
    <property type="protein sequence ID" value="AAH04056.1"/>
    <property type="molecule type" value="mRNA"/>
</dbReference>
<dbReference type="CCDS" id="CCDS22426.1">
    <molecule id="Q3TPR7-2"/>
</dbReference>
<dbReference type="RefSeq" id="NP_663574.3">
    <molecule id="Q3TPR7-2"/>
    <property type="nucleotide sequence ID" value="NM_145599.4"/>
</dbReference>
<dbReference type="FunCoup" id="Q3TPR7">
    <property type="interactions" value="2491"/>
</dbReference>
<dbReference type="STRING" id="10090.ENSMUSP00000034030"/>
<dbReference type="iPTMnet" id="Q3TPR7"/>
<dbReference type="PhosphoSitePlus" id="Q3TPR7"/>
<dbReference type="SwissPalm" id="Q3TPR7"/>
<dbReference type="ProteomicsDB" id="263225">
    <molecule id="Q3TPR7-1"/>
</dbReference>
<dbReference type="ProteomicsDB" id="263226">
    <molecule id="Q3TPR7-2"/>
</dbReference>
<dbReference type="Antibodypedia" id="45494">
    <property type="antibodies" value="54 antibodies from 18 providers"/>
</dbReference>
<dbReference type="Ensembl" id="ENSMUST00000034030.15">
    <molecule id="Q3TPR7-2"/>
    <property type="protein sequence ID" value="ENSMUSP00000034030.9"/>
    <property type="gene ID" value="ENSMUSG00000031617.17"/>
</dbReference>
<dbReference type="GeneID" id="234463"/>
<dbReference type="KEGG" id="mmu:234463"/>
<dbReference type="UCSC" id="uc009mhr.3">
    <molecule id="Q3TPR7-2"/>
    <property type="organism name" value="mouse"/>
</dbReference>
<dbReference type="AGR" id="MGI:2384562"/>
<dbReference type="CTD" id="55751"/>
<dbReference type="MGI" id="MGI:2384562">
    <property type="gene designation" value="Tmem184c"/>
</dbReference>
<dbReference type="VEuPathDB" id="HostDB:ENSMUSG00000031617"/>
<dbReference type="GeneTree" id="ENSGT00940000155201"/>
<dbReference type="HOGENOM" id="CLU_012923_1_1_1"/>
<dbReference type="InParanoid" id="Q3TPR7"/>
<dbReference type="OMA" id="IFPLCCL"/>
<dbReference type="PhylomeDB" id="Q3TPR7"/>
<dbReference type="TreeFam" id="TF324245"/>
<dbReference type="BioGRID-ORCS" id="234463">
    <property type="hits" value="1 hit in 77 CRISPR screens"/>
</dbReference>
<dbReference type="ChiTaRS" id="Tmem184c">
    <property type="organism name" value="mouse"/>
</dbReference>
<dbReference type="PRO" id="PR:Q3TPR7"/>
<dbReference type="Proteomes" id="UP000000589">
    <property type="component" value="Chromosome 8"/>
</dbReference>
<dbReference type="RNAct" id="Q3TPR7">
    <property type="molecule type" value="protein"/>
</dbReference>
<dbReference type="Bgee" id="ENSMUSG00000031617">
    <property type="expression patterns" value="Expressed in lateral geniculate body and 253 other cell types or tissues"/>
</dbReference>
<dbReference type="ExpressionAtlas" id="Q3TPR7">
    <property type="expression patterns" value="baseline and differential"/>
</dbReference>
<dbReference type="GO" id="GO:0016020">
    <property type="term" value="C:membrane"/>
    <property type="evidence" value="ECO:0007669"/>
    <property type="project" value="UniProtKB-SubCell"/>
</dbReference>
<dbReference type="InterPro" id="IPR005178">
    <property type="entry name" value="Ostalpha/TMEM184C"/>
</dbReference>
<dbReference type="PANTHER" id="PTHR23423">
    <property type="entry name" value="ORGANIC SOLUTE TRANSPORTER-RELATED"/>
    <property type="match status" value="1"/>
</dbReference>
<dbReference type="Pfam" id="PF03619">
    <property type="entry name" value="Solute_trans_a"/>
    <property type="match status" value="1"/>
</dbReference>
<dbReference type="SMART" id="SM01417">
    <property type="entry name" value="Solute_trans_a"/>
    <property type="match status" value="1"/>
</dbReference>
<name>T184C_MOUSE</name>